<sequence length="397" mass="41760">MAQSPPPQSLLGHDHWIFAQGWGWAGHWDSTSPASSSDSSGSCPCDGARGLPQPQPPSCSSRAAEAAATTPRRARTGPAGGQRQSASEREKLRMRTLARALHELRRFLPPSLAPAGQSLTKIETLRLAIRYIGHLSAVLGLSEESLQCRRRQRGDAGSPWGCPLCPDRGPAEAQTQAEGQGQGQGQGQGQGQGQGQGQGQGQGQGRRPGLVSAVLAEASWGSPSACPGAQAAPERLGRGVHDTDPWATPPYCPKIQSPPYSSQGTTSDASLWTPPQGCPWTQSSPEPRNPPVPWTAAPATLELAAVYQGLSVSPEPCLSLGAPSLLPHPSCQRLQPQTPGRCWSHSAEVVPNSEDQGPGAAFQLSEASPPQSSGLRFSGCPELWQEDLEGARLGIFY</sequence>
<evidence type="ECO:0000250" key="1"/>
<evidence type="ECO:0000255" key="2">
    <source>
        <dbReference type="PROSITE-ProRule" id="PRU00981"/>
    </source>
</evidence>
<evidence type="ECO:0000256" key="3">
    <source>
        <dbReference type="SAM" id="MobiDB-lite"/>
    </source>
</evidence>
<evidence type="ECO:0000269" key="4">
    <source>
    </source>
</evidence>
<evidence type="ECO:0000269" key="5">
    <source>
    </source>
</evidence>
<evidence type="ECO:0000305" key="6"/>
<dbReference type="EMBL" id="AC079075">
    <property type="status" value="NOT_ANNOTATED_CDS"/>
    <property type="molecule type" value="Genomic_DNA"/>
</dbReference>
<dbReference type="EMBL" id="BC111413">
    <property type="protein sequence ID" value="AAI11414.1"/>
    <property type="molecule type" value="mRNA"/>
</dbReference>
<dbReference type="EMBL" id="BK000142">
    <property type="protein sequence ID" value="DAA00304.1"/>
    <property type="status" value="ALT_SEQ"/>
    <property type="molecule type" value="Genomic_DNA"/>
</dbReference>
<dbReference type="CCDS" id="CCDS42078.1"/>
<dbReference type="RefSeq" id="NP_001035047.1">
    <property type="nucleotide sequence ID" value="NM_001039958.2"/>
</dbReference>
<dbReference type="SMR" id="Q0VG99"/>
<dbReference type="BioGRID" id="126951">
    <property type="interactions" value="10"/>
</dbReference>
<dbReference type="FunCoup" id="Q0VG99">
    <property type="interactions" value="509"/>
</dbReference>
<dbReference type="IntAct" id="Q0VG99">
    <property type="interactions" value="7"/>
</dbReference>
<dbReference type="STRING" id="9606.ENSP00000342392"/>
<dbReference type="GlyGen" id="Q0VG99">
    <property type="glycosylation" value="1 site, 1 O-linked glycan (1 site)"/>
</dbReference>
<dbReference type="iPTMnet" id="Q0VG99"/>
<dbReference type="PhosphoSitePlus" id="Q0VG99"/>
<dbReference type="BioMuta" id="MESP2"/>
<dbReference type="DMDM" id="290457624"/>
<dbReference type="PaxDb" id="9606-ENSP00000342392"/>
<dbReference type="Antibodypedia" id="28666">
    <property type="antibodies" value="103 antibodies from 27 providers"/>
</dbReference>
<dbReference type="DNASU" id="145873"/>
<dbReference type="Ensembl" id="ENST00000341735.5">
    <property type="protein sequence ID" value="ENSP00000342392.3"/>
    <property type="gene ID" value="ENSG00000188095.6"/>
</dbReference>
<dbReference type="GeneID" id="145873"/>
<dbReference type="KEGG" id="hsa:145873"/>
<dbReference type="MANE-Select" id="ENST00000341735.5">
    <property type="protein sequence ID" value="ENSP00000342392.3"/>
    <property type="RefSeq nucleotide sequence ID" value="NM_001039958.2"/>
    <property type="RefSeq protein sequence ID" value="NP_001035047.1"/>
</dbReference>
<dbReference type="UCSC" id="uc002bon.4">
    <property type="organism name" value="human"/>
</dbReference>
<dbReference type="AGR" id="HGNC:29659"/>
<dbReference type="CTD" id="145873"/>
<dbReference type="DisGeNET" id="145873"/>
<dbReference type="GeneCards" id="MESP2"/>
<dbReference type="GeneReviews" id="MESP2"/>
<dbReference type="HGNC" id="HGNC:29659">
    <property type="gene designation" value="MESP2"/>
</dbReference>
<dbReference type="HPA" id="ENSG00000188095">
    <property type="expression patterns" value="Low tissue specificity"/>
</dbReference>
<dbReference type="MalaCards" id="MESP2"/>
<dbReference type="MIM" id="605195">
    <property type="type" value="gene"/>
</dbReference>
<dbReference type="MIM" id="608681">
    <property type="type" value="phenotype"/>
</dbReference>
<dbReference type="neXtProt" id="NX_Q0VG99"/>
<dbReference type="OpenTargets" id="ENSG00000188095"/>
<dbReference type="Orphanet" id="2311">
    <property type="disease" value="Autosomal recessive spondylocostal dysostosis"/>
</dbReference>
<dbReference type="PharmGKB" id="PA142671469"/>
<dbReference type="VEuPathDB" id="HostDB:ENSG00000188095"/>
<dbReference type="eggNOG" id="KOG4029">
    <property type="taxonomic scope" value="Eukaryota"/>
</dbReference>
<dbReference type="GeneTree" id="ENSGT00530000063712"/>
<dbReference type="HOGENOM" id="CLU_064749_0_0_1"/>
<dbReference type="InParanoid" id="Q0VG99"/>
<dbReference type="OMA" id="GWAGHSD"/>
<dbReference type="OrthoDB" id="9946827at2759"/>
<dbReference type="PAN-GO" id="Q0VG99">
    <property type="GO annotations" value="7 GO annotations based on evolutionary models"/>
</dbReference>
<dbReference type="PhylomeDB" id="Q0VG99"/>
<dbReference type="TreeFam" id="TF325707"/>
<dbReference type="PathwayCommons" id="Q0VG99"/>
<dbReference type="Reactome" id="R-HSA-9824272">
    <property type="pathway name" value="Somitogenesis"/>
</dbReference>
<dbReference type="SignaLink" id="Q0VG99"/>
<dbReference type="BioGRID-ORCS" id="145873">
    <property type="hits" value="12 hits in 1168 CRISPR screens"/>
</dbReference>
<dbReference type="ChiTaRS" id="MESP2">
    <property type="organism name" value="human"/>
</dbReference>
<dbReference type="GeneWiki" id="MESP2"/>
<dbReference type="GenomeRNAi" id="145873"/>
<dbReference type="Pharos" id="Q0VG99">
    <property type="development level" value="Tbio"/>
</dbReference>
<dbReference type="PRO" id="PR:Q0VG99"/>
<dbReference type="Proteomes" id="UP000005640">
    <property type="component" value="Chromosome 15"/>
</dbReference>
<dbReference type="RNAct" id="Q0VG99">
    <property type="molecule type" value="protein"/>
</dbReference>
<dbReference type="Bgee" id="ENSG00000188095">
    <property type="expression patterns" value="Expressed in primordial germ cell in gonad and 115 other cell types or tissues"/>
</dbReference>
<dbReference type="ExpressionAtlas" id="Q0VG99">
    <property type="expression patterns" value="baseline and differential"/>
</dbReference>
<dbReference type="GO" id="GO:0000785">
    <property type="term" value="C:chromatin"/>
    <property type="evidence" value="ECO:0000247"/>
    <property type="project" value="NTNU_SB"/>
</dbReference>
<dbReference type="GO" id="GO:0005634">
    <property type="term" value="C:nucleus"/>
    <property type="evidence" value="ECO:0000318"/>
    <property type="project" value="GO_Central"/>
</dbReference>
<dbReference type="GO" id="GO:0000981">
    <property type="term" value="F:DNA-binding transcription factor activity, RNA polymerase II-specific"/>
    <property type="evidence" value="ECO:0000247"/>
    <property type="project" value="NTNU_SB"/>
</dbReference>
<dbReference type="GO" id="GO:0046983">
    <property type="term" value="F:protein dimerization activity"/>
    <property type="evidence" value="ECO:0007669"/>
    <property type="project" value="InterPro"/>
</dbReference>
<dbReference type="GO" id="GO:0000978">
    <property type="term" value="F:RNA polymerase II cis-regulatory region sequence-specific DNA binding"/>
    <property type="evidence" value="ECO:0000318"/>
    <property type="project" value="GO_Central"/>
</dbReference>
<dbReference type="GO" id="GO:1990837">
    <property type="term" value="F:sequence-specific double-stranded DNA binding"/>
    <property type="evidence" value="ECO:0000314"/>
    <property type="project" value="ARUK-UCL"/>
</dbReference>
<dbReference type="GO" id="GO:0003007">
    <property type="term" value="P:heart morphogenesis"/>
    <property type="evidence" value="ECO:0000318"/>
    <property type="project" value="GO_Central"/>
</dbReference>
<dbReference type="GO" id="GO:0001707">
    <property type="term" value="P:mesoderm formation"/>
    <property type="evidence" value="ECO:0000318"/>
    <property type="project" value="GO_Central"/>
</dbReference>
<dbReference type="GO" id="GO:0007219">
    <property type="term" value="P:Notch signaling pathway"/>
    <property type="evidence" value="ECO:0007669"/>
    <property type="project" value="UniProtKB-KW"/>
</dbReference>
<dbReference type="GO" id="GO:0006357">
    <property type="term" value="P:regulation of transcription by RNA polymerase II"/>
    <property type="evidence" value="ECO:0000318"/>
    <property type="project" value="GO_Central"/>
</dbReference>
<dbReference type="GO" id="GO:0032525">
    <property type="term" value="P:somite rostral/caudal axis specification"/>
    <property type="evidence" value="ECO:0000318"/>
    <property type="project" value="GO_Central"/>
</dbReference>
<dbReference type="CDD" id="cd18938">
    <property type="entry name" value="bHLH_TS_Mesp"/>
    <property type="match status" value="1"/>
</dbReference>
<dbReference type="FunFam" id="4.10.280.10:FF:000047">
    <property type="entry name" value="mesoderm posterior protein 1"/>
    <property type="match status" value="1"/>
</dbReference>
<dbReference type="Gene3D" id="4.10.280.10">
    <property type="entry name" value="Helix-loop-helix DNA-binding domain"/>
    <property type="match status" value="1"/>
</dbReference>
<dbReference type="InterPro" id="IPR011598">
    <property type="entry name" value="bHLH_dom"/>
</dbReference>
<dbReference type="InterPro" id="IPR036638">
    <property type="entry name" value="HLH_DNA-bd_sf"/>
</dbReference>
<dbReference type="InterPro" id="IPR040259">
    <property type="entry name" value="Mesogenin/MesP"/>
</dbReference>
<dbReference type="PANTHER" id="PTHR20937">
    <property type="entry name" value="IP14615P"/>
    <property type="match status" value="1"/>
</dbReference>
<dbReference type="PANTHER" id="PTHR20937:SF17">
    <property type="entry name" value="MESODERM POSTERIOR PROTEIN 2"/>
    <property type="match status" value="1"/>
</dbReference>
<dbReference type="Pfam" id="PF00010">
    <property type="entry name" value="HLH"/>
    <property type="match status" value="1"/>
</dbReference>
<dbReference type="SMART" id="SM00353">
    <property type="entry name" value="HLH"/>
    <property type="match status" value="1"/>
</dbReference>
<dbReference type="SUPFAM" id="SSF47459">
    <property type="entry name" value="HLH, helix-loop-helix DNA-binding domain"/>
    <property type="match status" value="1"/>
</dbReference>
<dbReference type="PROSITE" id="PS50888">
    <property type="entry name" value="BHLH"/>
    <property type="match status" value="1"/>
</dbReference>
<proteinExistence type="evidence at protein level"/>
<gene>
    <name type="primary">MESP2</name>
    <name type="synonym">BHLHC6</name>
    <name type="synonym">SCDO2</name>
</gene>
<keyword id="KW-0217">Developmental protein</keyword>
<keyword id="KW-0238">DNA-binding</keyword>
<keyword id="KW-0242">Dwarfism</keyword>
<keyword id="KW-0914">Notch signaling pathway</keyword>
<keyword id="KW-0539">Nucleus</keyword>
<keyword id="KW-1185">Reference proteome</keyword>
<keyword id="KW-0677">Repeat</keyword>
<keyword id="KW-0804">Transcription</keyword>
<keyword id="KW-0805">Transcription regulation</keyword>
<feature type="chain" id="PRO_0000296301" description="Mesoderm posterior protein 2">
    <location>
        <begin position="1"/>
        <end position="397"/>
    </location>
</feature>
<feature type="domain" description="bHLH" evidence="2">
    <location>
        <begin position="81"/>
        <end position="135"/>
    </location>
</feature>
<feature type="repeat" description="1">
    <location>
        <begin position="179"/>
        <end position="180"/>
    </location>
</feature>
<feature type="repeat" description="2">
    <location>
        <begin position="181"/>
        <end position="182"/>
    </location>
</feature>
<feature type="repeat" description="3">
    <location>
        <begin position="183"/>
        <end position="184"/>
    </location>
</feature>
<feature type="repeat" description="4">
    <location>
        <begin position="185"/>
        <end position="186"/>
    </location>
</feature>
<feature type="repeat" description="5">
    <location>
        <begin position="187"/>
        <end position="188"/>
    </location>
</feature>
<feature type="repeat" description="6">
    <location>
        <begin position="189"/>
        <end position="190"/>
    </location>
</feature>
<feature type="repeat" description="7">
    <location>
        <begin position="191"/>
        <end position="192"/>
    </location>
</feature>
<feature type="repeat" description="8">
    <location>
        <begin position="193"/>
        <end position="194"/>
    </location>
</feature>
<feature type="repeat" description="9">
    <location>
        <begin position="195"/>
        <end position="196"/>
    </location>
</feature>
<feature type="repeat" description="10">
    <location>
        <begin position="197"/>
        <end position="198"/>
    </location>
</feature>
<feature type="repeat" description="11">
    <location>
        <begin position="199"/>
        <end position="200"/>
    </location>
</feature>
<feature type="repeat" description="12">
    <location>
        <begin position="201"/>
        <end position="202"/>
    </location>
</feature>
<feature type="repeat" description="13">
    <location>
        <begin position="203"/>
        <end position="204"/>
    </location>
</feature>
<feature type="region of interest" description="Disordered" evidence="3">
    <location>
        <begin position="28"/>
        <end position="92"/>
    </location>
</feature>
<feature type="region of interest" description="Disordered" evidence="3">
    <location>
        <begin position="152"/>
        <end position="208"/>
    </location>
</feature>
<feature type="region of interest" description="13 X 2 AA tandem repeats of G-Q">
    <location>
        <begin position="179"/>
        <end position="204"/>
    </location>
</feature>
<feature type="region of interest" description="Disordered" evidence="3">
    <location>
        <begin position="222"/>
        <end position="295"/>
    </location>
</feature>
<feature type="region of interest" description="Disordered" evidence="3">
    <location>
        <begin position="351"/>
        <end position="376"/>
    </location>
</feature>
<feature type="compositionally biased region" description="Low complexity" evidence="3">
    <location>
        <begin position="32"/>
        <end position="48"/>
    </location>
</feature>
<feature type="compositionally biased region" description="Low complexity" evidence="3">
    <location>
        <begin position="58"/>
        <end position="71"/>
    </location>
</feature>
<feature type="compositionally biased region" description="Gly residues" evidence="3">
    <location>
        <begin position="180"/>
        <end position="206"/>
    </location>
</feature>
<feature type="compositionally biased region" description="Basic and acidic residues" evidence="3">
    <location>
        <begin position="235"/>
        <end position="244"/>
    </location>
</feature>
<feature type="compositionally biased region" description="Polar residues" evidence="3">
    <location>
        <begin position="258"/>
        <end position="270"/>
    </location>
</feature>
<feature type="compositionally biased region" description="Polar residues" evidence="3">
    <location>
        <begin position="365"/>
        <end position="375"/>
    </location>
</feature>
<feature type="sequence variant" id="VAR_046779" description="In dbSNP:rs71647809." evidence="5">
    <original>A</original>
    <variation>G</variation>
    <location>
        <position position="66"/>
    </location>
</feature>
<feature type="sequence variant" id="VAR_046780" description="In a patient with spondylocostal dysostosis; inactive; dbSNP:rs71647806." evidence="5">
    <original>L</original>
    <variation>V</variation>
    <location>
        <position position="125"/>
    </location>
</feature>
<feature type="sequence variant" id="VAR_061257" description="In dbSNP:rs28462216.">
    <original>V</original>
    <variation>M</variation>
    <location>
        <position position="138"/>
    </location>
</feature>
<feature type="sequence variant" id="VAR_046781" description="In dbSNP:rs71647807." evidence="5">
    <original>S</original>
    <variation>F</variation>
    <location>
        <position position="224"/>
    </location>
</feature>
<feature type="sequence conflict" description="In Ref. 2; AAI11414." evidence="6" ref="2">
    <location>
        <begin position="202"/>
        <end position="205"/>
    </location>
</feature>
<accession>Q0VG99</accession>
<accession>Q7RTU2</accession>
<protein>
    <recommendedName>
        <fullName>Mesoderm posterior protein 2</fullName>
    </recommendedName>
    <alternativeName>
        <fullName>Class C basic helix-loop-helix protein 6</fullName>
        <shortName>bHLHc6</shortName>
    </alternativeName>
</protein>
<comment type="function">
    <text>Transcription factor with important role in somitogenesis. Defines the rostrocaudal patterning of the somite by participating in distinct Notch pathways. Also regulates the FGF signaling pathway. Specifies the rostral half of the somites. Generates rostro-caudal polarity of somites by down-regulating in the presumptive rostral domain DLL1, a Notch ligand. Participates in the segment border formation by activating in the anterior presomitic mesoderm LFNG, a negative regulator of DLL1-Notch signaling. Acts as a strong suppressor of Notch activity. Together with MESP1 is involved in the epithelialization of somitic mesoderm and in the development of cardiac mesoderm.</text>
</comment>
<comment type="subcellular location">
    <subcellularLocation>
        <location evidence="2">Nucleus</location>
    </subcellularLocation>
</comment>
<comment type="PTM">
    <text evidence="1">Degraded by the proteasome.</text>
</comment>
<comment type="polymorphism">
    <text evidence="4">The number of GQ repeats at position 179 is polymorphic.</text>
</comment>
<comment type="disease" evidence="4">
    <disease id="DI-01082">
        <name>Spondylocostal dysostosis 2, autosomal recessive</name>
        <acronym>SCDO2</acronym>
        <description>A condition of variable severity associated with vertebral and rib segmentation defects. The main skeletal malformations include fusion of vertebrae, hemivertebrae, fusion of certain ribs, and other rib malformations. Deformity of the chest and spine (severe scoliosis, kyphoscoliosis and lordosis) is a natural consequence of the malformation and leads to a dwarf-like appearance. As the thorax is small, infants frequently have respiratory insufficiency and repeated respiratory infections resulting in life-threatening complications in the first year of life.</description>
        <dbReference type="MIM" id="608681"/>
    </disease>
    <text>The disease is caused by variants affecting the gene represented in this entry.</text>
</comment>
<comment type="sequence caution" evidence="6">
    <conflict type="erroneous gene model prediction">
        <sequence resource="EMBL-CDS" id="DAA00304"/>
    </conflict>
</comment>
<organism>
    <name type="scientific">Homo sapiens</name>
    <name type="common">Human</name>
    <dbReference type="NCBI Taxonomy" id="9606"/>
    <lineage>
        <taxon>Eukaryota</taxon>
        <taxon>Metazoa</taxon>
        <taxon>Chordata</taxon>
        <taxon>Craniata</taxon>
        <taxon>Vertebrata</taxon>
        <taxon>Euteleostomi</taxon>
        <taxon>Mammalia</taxon>
        <taxon>Eutheria</taxon>
        <taxon>Euarchontoglires</taxon>
        <taxon>Primates</taxon>
        <taxon>Haplorrhini</taxon>
        <taxon>Catarrhini</taxon>
        <taxon>Hominidae</taxon>
        <taxon>Homo</taxon>
    </lineage>
</organism>
<reference key="1">
    <citation type="journal article" date="2006" name="Nature">
        <title>Analysis of the DNA sequence and duplication history of human chromosome 15.</title>
        <authorList>
            <person name="Zody M.C."/>
            <person name="Garber M."/>
            <person name="Sharpe T."/>
            <person name="Young S.K."/>
            <person name="Rowen L."/>
            <person name="O'Neill K."/>
            <person name="Whittaker C.A."/>
            <person name="Kamal M."/>
            <person name="Chang J.L."/>
            <person name="Cuomo C.A."/>
            <person name="Dewar K."/>
            <person name="FitzGerald M.G."/>
            <person name="Kodira C.D."/>
            <person name="Madan A."/>
            <person name="Qin S."/>
            <person name="Yang X."/>
            <person name="Abbasi N."/>
            <person name="Abouelleil A."/>
            <person name="Arachchi H.M."/>
            <person name="Baradarani L."/>
            <person name="Birditt B."/>
            <person name="Bloom S."/>
            <person name="Bloom T."/>
            <person name="Borowsky M.L."/>
            <person name="Burke J."/>
            <person name="Butler J."/>
            <person name="Cook A."/>
            <person name="DeArellano K."/>
            <person name="DeCaprio D."/>
            <person name="Dorris L. III"/>
            <person name="Dors M."/>
            <person name="Eichler E.E."/>
            <person name="Engels R."/>
            <person name="Fahey J."/>
            <person name="Fleetwood P."/>
            <person name="Friedman C."/>
            <person name="Gearin G."/>
            <person name="Hall J.L."/>
            <person name="Hensley G."/>
            <person name="Johnson E."/>
            <person name="Jones C."/>
            <person name="Kamat A."/>
            <person name="Kaur A."/>
            <person name="Locke D.P."/>
            <person name="Madan A."/>
            <person name="Munson G."/>
            <person name="Jaffe D.B."/>
            <person name="Lui A."/>
            <person name="Macdonald P."/>
            <person name="Mauceli E."/>
            <person name="Naylor J.W."/>
            <person name="Nesbitt R."/>
            <person name="Nicol R."/>
            <person name="O'Leary S.B."/>
            <person name="Ratcliffe A."/>
            <person name="Rounsley S."/>
            <person name="She X."/>
            <person name="Sneddon K.M.B."/>
            <person name="Stewart S."/>
            <person name="Sougnez C."/>
            <person name="Stone S.M."/>
            <person name="Topham K."/>
            <person name="Vincent D."/>
            <person name="Wang S."/>
            <person name="Zimmer A.R."/>
            <person name="Birren B.W."/>
            <person name="Hood L."/>
            <person name="Lander E.S."/>
            <person name="Nusbaum C."/>
        </authorList>
    </citation>
    <scope>NUCLEOTIDE SEQUENCE [LARGE SCALE GENOMIC DNA]</scope>
</reference>
<reference key="2">
    <citation type="journal article" date="2004" name="Genome Res.">
        <title>The status, quality, and expansion of the NIH full-length cDNA project: the Mammalian Gene Collection (MGC).</title>
        <authorList>
            <consortium name="The MGC Project Team"/>
        </authorList>
    </citation>
    <scope>NUCLEOTIDE SEQUENCE [LARGE SCALE MRNA]</scope>
</reference>
<reference key="3">
    <citation type="journal article" date="2002" name="Mech. Dev.">
        <title>Exhaustive identification of human class II basic helix-loop-helix proteins by virtual library screening.</title>
        <authorList>
            <person name="McLellan A.S."/>
            <person name="Langlands K."/>
            <person name="Kealey T."/>
        </authorList>
    </citation>
    <scope>IDENTIFICATION</scope>
</reference>
<reference key="4">
    <citation type="journal article" date="2004" name="Am. J. Hum. Genet.">
        <title>Mutated MESP2 causes spondylocostal dysostosis in humans.</title>
        <authorList>
            <person name="Whittock N.V."/>
            <person name="Sparrow D.B."/>
            <person name="Wouters M.A."/>
            <person name="Sillence D."/>
            <person name="Ellard S."/>
            <person name="Dunwoodie S.L."/>
            <person name="Turnpenny P.D."/>
        </authorList>
    </citation>
    <scope>INVOLVEMENT IN SCDO2</scope>
    <scope>POLYMORPHISM</scope>
</reference>
<reference key="5">
    <citation type="journal article" date="2008" name="Am. J. Hum. Genet.">
        <title>Mutations in the MESP2 gene cause spondylothoracic dysostosis/Jarcho-Levin syndrome.</title>
        <authorList>
            <person name="Cornier A.S."/>
            <person name="Staehling-Hampton K."/>
            <person name="Delventhal K.M."/>
            <person name="Saga Y."/>
            <person name="Caubet J.-F."/>
            <person name="Sasaki N."/>
            <person name="Ellard S."/>
            <person name="Young E."/>
            <person name="Ramirez N."/>
            <person name="Carlo S.E."/>
            <person name="Torres J."/>
            <person name="Emans J.B."/>
            <person name="Turnpenny P.D."/>
            <person name="Pourquie O."/>
        </authorList>
    </citation>
    <scope>VARIANTS GLY-66; VAL-125 AND PHE-224</scope>
    <scope>CHARACTERIZATION OF VARIANT VAL-125</scope>
</reference>
<name>MESP2_HUMAN</name>